<evidence type="ECO:0000255" key="1">
    <source>
        <dbReference type="HAMAP-Rule" id="MF_00019"/>
    </source>
</evidence>
<accession>C3P624</accession>
<proteinExistence type="inferred from homology"/>
<feature type="chain" id="PRO_1000193123" description="Phosphate acyltransferase">
    <location>
        <begin position="1"/>
        <end position="330"/>
    </location>
</feature>
<name>PLSX_BACAA</name>
<reference key="1">
    <citation type="submission" date="2009-04" db="EMBL/GenBank/DDBJ databases">
        <title>Genome sequence of Bacillus anthracis A0248.</title>
        <authorList>
            <person name="Dodson R.J."/>
            <person name="Munk A.C."/>
            <person name="Bruce D."/>
            <person name="Detter C."/>
            <person name="Tapia R."/>
            <person name="Sutton G."/>
            <person name="Sims D."/>
            <person name="Brettin T."/>
        </authorList>
    </citation>
    <scope>NUCLEOTIDE SEQUENCE [LARGE SCALE GENOMIC DNA]</scope>
    <source>
        <strain>A0248</strain>
    </source>
</reference>
<comment type="function">
    <text evidence="1">Catalyzes the reversible formation of acyl-phosphate (acyl-PO(4)) from acyl-[acyl-carrier-protein] (acyl-ACP). This enzyme utilizes acyl-ACP as fatty acyl donor, but not acyl-CoA.</text>
</comment>
<comment type="catalytic activity">
    <reaction evidence="1">
        <text>a fatty acyl-[ACP] + phosphate = an acyl phosphate + holo-[ACP]</text>
        <dbReference type="Rhea" id="RHEA:42292"/>
        <dbReference type="Rhea" id="RHEA-COMP:9685"/>
        <dbReference type="Rhea" id="RHEA-COMP:14125"/>
        <dbReference type="ChEBI" id="CHEBI:43474"/>
        <dbReference type="ChEBI" id="CHEBI:59918"/>
        <dbReference type="ChEBI" id="CHEBI:64479"/>
        <dbReference type="ChEBI" id="CHEBI:138651"/>
        <dbReference type="EC" id="2.3.1.274"/>
    </reaction>
</comment>
<comment type="pathway">
    <text evidence="1">Lipid metabolism; phospholipid metabolism.</text>
</comment>
<comment type="subunit">
    <text evidence="1">Homodimer. Probably interacts with PlsY.</text>
</comment>
<comment type="subcellular location">
    <subcellularLocation>
        <location evidence="1">Cytoplasm</location>
    </subcellularLocation>
    <text evidence="1">Associated with the membrane possibly through PlsY.</text>
</comment>
<comment type="similarity">
    <text evidence="1">Belongs to the PlsX family.</text>
</comment>
<organism>
    <name type="scientific">Bacillus anthracis (strain A0248)</name>
    <dbReference type="NCBI Taxonomy" id="592021"/>
    <lineage>
        <taxon>Bacteria</taxon>
        <taxon>Bacillati</taxon>
        <taxon>Bacillota</taxon>
        <taxon>Bacilli</taxon>
        <taxon>Bacillales</taxon>
        <taxon>Bacillaceae</taxon>
        <taxon>Bacillus</taxon>
        <taxon>Bacillus cereus group</taxon>
    </lineage>
</organism>
<dbReference type="EC" id="2.3.1.274" evidence="1"/>
<dbReference type="EMBL" id="CP001598">
    <property type="protein sequence ID" value="ACQ46022.1"/>
    <property type="molecule type" value="Genomic_DNA"/>
</dbReference>
<dbReference type="RefSeq" id="WP_000684111.1">
    <property type="nucleotide sequence ID" value="NC_012659.1"/>
</dbReference>
<dbReference type="SMR" id="C3P624"/>
<dbReference type="GeneID" id="45023681"/>
<dbReference type="KEGG" id="bai:BAA_4015"/>
<dbReference type="HOGENOM" id="CLU_039379_1_1_9"/>
<dbReference type="UniPathway" id="UPA00085"/>
<dbReference type="GO" id="GO:0005737">
    <property type="term" value="C:cytoplasm"/>
    <property type="evidence" value="ECO:0007669"/>
    <property type="project" value="UniProtKB-SubCell"/>
</dbReference>
<dbReference type="GO" id="GO:0043811">
    <property type="term" value="F:phosphate:acyl-[acyl carrier protein] acyltransferase activity"/>
    <property type="evidence" value="ECO:0007669"/>
    <property type="project" value="UniProtKB-UniRule"/>
</dbReference>
<dbReference type="GO" id="GO:0006633">
    <property type="term" value="P:fatty acid biosynthetic process"/>
    <property type="evidence" value="ECO:0007669"/>
    <property type="project" value="UniProtKB-UniRule"/>
</dbReference>
<dbReference type="GO" id="GO:0008654">
    <property type="term" value="P:phospholipid biosynthetic process"/>
    <property type="evidence" value="ECO:0007669"/>
    <property type="project" value="UniProtKB-KW"/>
</dbReference>
<dbReference type="Gene3D" id="3.40.718.10">
    <property type="entry name" value="Isopropylmalate Dehydrogenase"/>
    <property type="match status" value="1"/>
</dbReference>
<dbReference type="HAMAP" id="MF_00019">
    <property type="entry name" value="PlsX"/>
    <property type="match status" value="1"/>
</dbReference>
<dbReference type="InterPro" id="IPR003664">
    <property type="entry name" value="FA_synthesis"/>
</dbReference>
<dbReference type="InterPro" id="IPR012281">
    <property type="entry name" value="Phospholipid_synth_PlsX-like"/>
</dbReference>
<dbReference type="NCBIfam" id="TIGR00182">
    <property type="entry name" value="plsX"/>
    <property type="match status" value="1"/>
</dbReference>
<dbReference type="PANTHER" id="PTHR30100">
    <property type="entry name" value="FATTY ACID/PHOSPHOLIPID SYNTHESIS PROTEIN PLSX"/>
    <property type="match status" value="1"/>
</dbReference>
<dbReference type="PANTHER" id="PTHR30100:SF1">
    <property type="entry name" value="PHOSPHATE ACYLTRANSFERASE"/>
    <property type="match status" value="1"/>
</dbReference>
<dbReference type="Pfam" id="PF02504">
    <property type="entry name" value="FA_synthesis"/>
    <property type="match status" value="1"/>
</dbReference>
<dbReference type="PIRSF" id="PIRSF002465">
    <property type="entry name" value="Phsphlp_syn_PlsX"/>
    <property type="match status" value="1"/>
</dbReference>
<dbReference type="SUPFAM" id="SSF53659">
    <property type="entry name" value="Isocitrate/Isopropylmalate dehydrogenase-like"/>
    <property type="match status" value="1"/>
</dbReference>
<protein>
    <recommendedName>
        <fullName evidence="1">Phosphate acyltransferase</fullName>
        <ecNumber evidence="1">2.3.1.274</ecNumber>
    </recommendedName>
    <alternativeName>
        <fullName evidence="1">Acyl-ACP phosphotransacylase</fullName>
    </alternativeName>
    <alternativeName>
        <fullName evidence="1">Acyl-[acyl-carrier-protein]--phosphate acyltransferase</fullName>
    </alternativeName>
    <alternativeName>
        <fullName evidence="1">Phosphate-acyl-ACP acyltransferase</fullName>
    </alternativeName>
</protein>
<gene>
    <name evidence="1" type="primary">plsX</name>
    <name type="ordered locus">BAA_4015</name>
</gene>
<sequence>MKIAIDAMGGDHAPKAVVLGAMKAIKEYSDLHITLVGKEEEIRQYLTSEERITILHTDEKIESTDEPVRAVRRKKQASMVLAAQQVKDGVADACISAGSTGALMAAGLFVVGRMEGIERPALSPTMPTVDGEGFVMLDVGANVDAKPIHLYQYAVMGSVYAEKVRGIKNPRVGLLNVGTEGGKGNELSKQVFAMLKDAPINFVGNVESRDLLQGVADVVVCDGFTGNVALKSLEGTALALFSMLKEQLMSSFTSKLAAAVLKPKLMVLKDKMDYSEYGGAALFGLKAPVIKAHGSSNDQSIFSAIRQTREMVAKEVIPTISSVMEKEPLQ</sequence>
<keyword id="KW-0963">Cytoplasm</keyword>
<keyword id="KW-0444">Lipid biosynthesis</keyword>
<keyword id="KW-0443">Lipid metabolism</keyword>
<keyword id="KW-0594">Phospholipid biosynthesis</keyword>
<keyword id="KW-1208">Phospholipid metabolism</keyword>
<keyword id="KW-0808">Transferase</keyword>